<protein>
    <recommendedName>
        <fullName evidence="4">Phalloidin proprotein</fullName>
    </recommendedName>
    <component>
        <recommendedName>
            <fullName evidence="4">Phalloidin</fullName>
        </recommendedName>
    </component>
</protein>
<keyword id="KW-0002">3D-structure</keyword>
<keyword id="KW-0883">Thioether bond</keyword>
<keyword id="KW-0800">Toxin</keyword>
<proteinExistence type="evidence at protein level"/>
<name>PHAD3_AMAPH</name>
<reference key="1">
    <citation type="journal article" date="2016" name="BMC Genomics">
        <title>Expansion and diversification of the MSDIN family of cyclic peptide genes in the poisonous agarics Amanita phalloides and A. bisporigera.</title>
        <authorList>
            <person name="Pulman J.A."/>
            <person name="Childs K.L."/>
            <person name="Sgambelluri R.M."/>
            <person name="Walton J.D."/>
        </authorList>
    </citation>
    <scope>NUCLEOTIDE SEQUENCE [LARGE SCALE GENOMIC DNA]</scope>
    <scope>FUNCTION</scope>
</reference>
<reference key="2">
    <citation type="journal article" date="1981" name="Biochemistry">
        <title>Mechanism of action of phalloidin on the polymerization of muscle actin.</title>
        <authorList>
            <person name="Estes J.E."/>
            <person name="Selden L.A."/>
            <person name="Gershman L.C."/>
        </authorList>
    </citation>
    <scope>FUNCTION</scope>
</reference>
<sequence length="34" mass="3593">MSDINASRLPAWLATCPCVGDDVNPTLSRGESLC</sequence>
<accession>P0CU65</accession>
<dbReference type="PDB" id="6D8C">
    <property type="method" value="EM"/>
    <property type="resolution" value="3.54 A"/>
    <property type="chains" value="N/O/P=10-16"/>
</dbReference>
<dbReference type="PDBsum" id="6D8C"/>
<dbReference type="EMDB" id="EMD-7831"/>
<dbReference type="SMR" id="P0CU65"/>
<dbReference type="GO" id="GO:0090729">
    <property type="term" value="F:toxin activity"/>
    <property type="evidence" value="ECO:0007669"/>
    <property type="project" value="UniProtKB-KW"/>
</dbReference>
<dbReference type="InterPro" id="IPR027582">
    <property type="entry name" value="Amanitin/phalloidin"/>
</dbReference>
<dbReference type="NCBIfam" id="TIGR04309">
    <property type="entry name" value="amanitin"/>
    <property type="match status" value="1"/>
</dbReference>
<feature type="propeptide" id="PRO_0000443795" evidence="6">
    <location>
        <begin position="1"/>
        <end position="10"/>
    </location>
</feature>
<feature type="peptide" id="PRO_0000443796" description="Phalloidin" evidence="6">
    <location>
        <begin position="11"/>
        <end position="17"/>
    </location>
</feature>
<feature type="propeptide" id="PRO_0000443797" evidence="6">
    <location>
        <begin position="18"/>
        <end position="34"/>
    </location>
</feature>
<feature type="cross-link" description="Cyclopeptide (Ala-Pro)" evidence="6">
    <location>
        <begin position="11"/>
        <end position="17"/>
    </location>
</feature>
<feature type="cross-link" description="2'-cysteinyl-6'-hydroxytryptophan sulfoxide (Trp-Cys)" evidence="2">
    <location>
        <begin position="12"/>
        <end position="16"/>
    </location>
</feature>
<organism>
    <name type="scientific">Amanita phalloides</name>
    <name type="common">Death cap</name>
    <dbReference type="NCBI Taxonomy" id="67723"/>
    <lineage>
        <taxon>Eukaryota</taxon>
        <taxon>Fungi</taxon>
        <taxon>Dikarya</taxon>
        <taxon>Basidiomycota</taxon>
        <taxon>Agaricomycotina</taxon>
        <taxon>Agaricomycetes</taxon>
        <taxon>Agaricomycetidae</taxon>
        <taxon>Agaricales</taxon>
        <taxon>Pluteineae</taxon>
        <taxon>Amanitaceae</taxon>
        <taxon>Amanita</taxon>
    </lineage>
</organism>
<comment type="function">
    <text evidence="3 6">Toxin that belongs to the bicyclic heptapeptides called phallotoxins (PubMed:27978833). Although structurally related to amatoxins, phallotoxins have a different mode of action, which is the stabilization of F-actin (PubMed:6452160). Phallotoxins are poisonous when administered parenterally, but not orally because of poor absorption (PubMed:27978833).</text>
</comment>
<comment type="PTM">
    <text evidence="1">Processed by the macrocyclase-peptidase enzyme POPB to yield a toxic cyclic heptapeptide (By similarity). POPB first removes 10 residues from the N-terminus (By similarity). Conformational trapping of the remaining peptide forces the enzyme to release this intermediate rather than proceed to macrocyclization (By similarity). The enzyme rebinds the remaining peptide in a different conformation and catalyzes macrocyclization of the N-terminal 7 residues (By similarity).</text>
</comment>
<comment type="similarity">
    <text evidence="5">Belongs to the MSDIN fungal toxin family.</text>
</comment>
<evidence type="ECO:0000250" key="1">
    <source>
        <dbReference type="UniProtKB" id="A0A067SLB9"/>
    </source>
</evidence>
<evidence type="ECO:0000250" key="2">
    <source>
        <dbReference type="UniProtKB" id="P85421"/>
    </source>
</evidence>
<evidence type="ECO:0000269" key="3">
    <source>
    </source>
</evidence>
<evidence type="ECO:0000303" key="4">
    <source>
    </source>
</evidence>
<evidence type="ECO:0000305" key="5"/>
<evidence type="ECO:0000305" key="6">
    <source>
    </source>
</evidence>